<name>LON_AZOBR</name>
<comment type="function">
    <text evidence="1">ATP-dependent serine protease that mediates the selective degradation of mutant and abnormal proteins as well as certain short-lived regulatory proteins. Required for cellular homeostasis and for survival from DNA damage and developmental changes induced by stress. Degrades polypeptides processively to yield small peptide fragments that are 5 to 10 amino acids long. Binds to DNA in a double-stranded, site-specific manner (By similarity). Involved in iron uptake.</text>
</comment>
<comment type="catalytic activity">
    <reaction evidence="1">
        <text>Hydrolysis of proteins in presence of ATP.</text>
        <dbReference type="EC" id="3.4.21.53"/>
    </reaction>
</comment>
<comment type="subunit">
    <text evidence="1">Homohexamer. Organized in a ring with a central cavity.</text>
</comment>
<comment type="subcellular location">
    <subcellularLocation>
        <location>Cytoplasm</location>
    </subcellularLocation>
</comment>
<comment type="induction">
    <text evidence="1 4">By heat shock.</text>
</comment>
<comment type="similarity">
    <text evidence="1">Belongs to the peptidase S16 family.</text>
</comment>
<proteinExistence type="evidence at transcript level"/>
<protein>
    <recommendedName>
        <fullName evidence="1">Lon protease</fullName>
        <ecNumber evidence="1">3.4.21.53</ecNumber>
    </recommendedName>
    <alternativeName>
        <fullName evidence="1">ATP-dependent protease La</fullName>
    </alternativeName>
</protein>
<feature type="chain" id="PRO_0000076115" description="Lon protease">
    <location>
        <begin position="1"/>
        <end position="810"/>
    </location>
</feature>
<feature type="domain" description="Lon N-terminal" evidence="3">
    <location>
        <begin position="16"/>
        <end position="209"/>
    </location>
</feature>
<feature type="domain" description="Lon proteolytic" evidence="2">
    <location>
        <begin position="598"/>
        <end position="779"/>
    </location>
</feature>
<feature type="active site" evidence="1">
    <location>
        <position position="685"/>
    </location>
</feature>
<feature type="active site" evidence="1">
    <location>
        <position position="728"/>
    </location>
</feature>
<feature type="binding site" evidence="1">
    <location>
        <begin position="361"/>
        <end position="368"/>
    </location>
    <ligand>
        <name>ATP</name>
        <dbReference type="ChEBI" id="CHEBI:30616"/>
    </ligand>
</feature>
<keyword id="KW-0067">ATP-binding</keyword>
<keyword id="KW-0963">Cytoplasm</keyword>
<keyword id="KW-0378">Hydrolase</keyword>
<keyword id="KW-0547">Nucleotide-binding</keyword>
<keyword id="KW-0645">Protease</keyword>
<keyword id="KW-0720">Serine protease</keyword>
<keyword id="KW-0346">Stress response</keyword>
<gene>
    <name evidence="1" type="primary">lon</name>
</gene>
<dbReference type="EC" id="3.4.21.53" evidence="1"/>
<dbReference type="EMBL" id="U35611">
    <property type="protein sequence ID" value="AAB16819.1"/>
    <property type="molecule type" value="Genomic_DNA"/>
</dbReference>
<dbReference type="PIR" id="JC6045">
    <property type="entry name" value="JC6045"/>
</dbReference>
<dbReference type="SMR" id="P77810"/>
<dbReference type="MEROPS" id="S16.001"/>
<dbReference type="GO" id="GO:0005737">
    <property type="term" value="C:cytoplasm"/>
    <property type="evidence" value="ECO:0007669"/>
    <property type="project" value="UniProtKB-SubCell"/>
</dbReference>
<dbReference type="GO" id="GO:0005524">
    <property type="term" value="F:ATP binding"/>
    <property type="evidence" value="ECO:0007669"/>
    <property type="project" value="UniProtKB-UniRule"/>
</dbReference>
<dbReference type="GO" id="GO:0016887">
    <property type="term" value="F:ATP hydrolysis activity"/>
    <property type="evidence" value="ECO:0007669"/>
    <property type="project" value="UniProtKB-UniRule"/>
</dbReference>
<dbReference type="GO" id="GO:0004176">
    <property type="term" value="F:ATP-dependent peptidase activity"/>
    <property type="evidence" value="ECO:0007669"/>
    <property type="project" value="UniProtKB-UniRule"/>
</dbReference>
<dbReference type="GO" id="GO:0043565">
    <property type="term" value="F:sequence-specific DNA binding"/>
    <property type="evidence" value="ECO:0007669"/>
    <property type="project" value="UniProtKB-UniRule"/>
</dbReference>
<dbReference type="GO" id="GO:0004252">
    <property type="term" value="F:serine-type endopeptidase activity"/>
    <property type="evidence" value="ECO:0007669"/>
    <property type="project" value="UniProtKB-UniRule"/>
</dbReference>
<dbReference type="GO" id="GO:0034605">
    <property type="term" value="P:cellular response to heat"/>
    <property type="evidence" value="ECO:0007669"/>
    <property type="project" value="UniProtKB-UniRule"/>
</dbReference>
<dbReference type="GO" id="GO:0006515">
    <property type="term" value="P:protein quality control for misfolded or incompletely synthesized proteins"/>
    <property type="evidence" value="ECO:0007669"/>
    <property type="project" value="UniProtKB-UniRule"/>
</dbReference>
<dbReference type="CDD" id="cd19500">
    <property type="entry name" value="RecA-like_Lon"/>
    <property type="match status" value="1"/>
</dbReference>
<dbReference type="FunFam" id="1.20.58.1480:FF:000001">
    <property type="entry name" value="Lon protease"/>
    <property type="match status" value="1"/>
</dbReference>
<dbReference type="FunFam" id="3.30.230.10:FF:000010">
    <property type="entry name" value="Lon protease"/>
    <property type="match status" value="1"/>
</dbReference>
<dbReference type="FunFam" id="1.20.5.5270:FF:000002">
    <property type="entry name" value="Lon protease homolog"/>
    <property type="match status" value="1"/>
</dbReference>
<dbReference type="FunFam" id="3.40.50.300:FF:000021">
    <property type="entry name" value="Lon protease homolog"/>
    <property type="match status" value="1"/>
</dbReference>
<dbReference type="Gene3D" id="1.10.8.60">
    <property type="match status" value="1"/>
</dbReference>
<dbReference type="Gene3D" id="1.20.5.5270">
    <property type="match status" value="1"/>
</dbReference>
<dbReference type="Gene3D" id="1.20.58.1480">
    <property type="match status" value="1"/>
</dbReference>
<dbReference type="Gene3D" id="3.30.230.10">
    <property type="match status" value="1"/>
</dbReference>
<dbReference type="Gene3D" id="2.30.130.40">
    <property type="entry name" value="LON domain-like"/>
    <property type="match status" value="1"/>
</dbReference>
<dbReference type="Gene3D" id="3.40.50.300">
    <property type="entry name" value="P-loop containing nucleotide triphosphate hydrolases"/>
    <property type="match status" value="1"/>
</dbReference>
<dbReference type="HAMAP" id="MF_01973">
    <property type="entry name" value="lon_bact"/>
    <property type="match status" value="1"/>
</dbReference>
<dbReference type="InterPro" id="IPR003593">
    <property type="entry name" value="AAA+_ATPase"/>
</dbReference>
<dbReference type="InterPro" id="IPR003959">
    <property type="entry name" value="ATPase_AAA_core"/>
</dbReference>
<dbReference type="InterPro" id="IPR027543">
    <property type="entry name" value="Lon_bac"/>
</dbReference>
<dbReference type="InterPro" id="IPR004815">
    <property type="entry name" value="Lon_bac/euk-typ"/>
</dbReference>
<dbReference type="InterPro" id="IPR054594">
    <property type="entry name" value="Lon_lid"/>
</dbReference>
<dbReference type="InterPro" id="IPR008269">
    <property type="entry name" value="Lon_proteolytic"/>
</dbReference>
<dbReference type="InterPro" id="IPR027065">
    <property type="entry name" value="Lon_Prtase"/>
</dbReference>
<dbReference type="InterPro" id="IPR003111">
    <property type="entry name" value="Lon_prtase_N"/>
</dbReference>
<dbReference type="InterPro" id="IPR046336">
    <property type="entry name" value="Lon_prtase_N_sf"/>
</dbReference>
<dbReference type="InterPro" id="IPR027417">
    <property type="entry name" value="P-loop_NTPase"/>
</dbReference>
<dbReference type="InterPro" id="IPR008268">
    <property type="entry name" value="Peptidase_S16_AS"/>
</dbReference>
<dbReference type="InterPro" id="IPR015947">
    <property type="entry name" value="PUA-like_sf"/>
</dbReference>
<dbReference type="InterPro" id="IPR020568">
    <property type="entry name" value="Ribosomal_Su5_D2-typ_SF"/>
</dbReference>
<dbReference type="InterPro" id="IPR014721">
    <property type="entry name" value="Ribsml_uS5_D2-typ_fold_subgr"/>
</dbReference>
<dbReference type="NCBIfam" id="TIGR00763">
    <property type="entry name" value="lon"/>
    <property type="match status" value="1"/>
</dbReference>
<dbReference type="NCBIfam" id="NF008053">
    <property type="entry name" value="PRK10787.1"/>
    <property type="match status" value="1"/>
</dbReference>
<dbReference type="PANTHER" id="PTHR10046">
    <property type="entry name" value="ATP DEPENDENT LON PROTEASE FAMILY MEMBER"/>
    <property type="match status" value="1"/>
</dbReference>
<dbReference type="Pfam" id="PF00004">
    <property type="entry name" value="AAA"/>
    <property type="match status" value="1"/>
</dbReference>
<dbReference type="Pfam" id="PF05362">
    <property type="entry name" value="Lon_C"/>
    <property type="match status" value="1"/>
</dbReference>
<dbReference type="Pfam" id="PF22667">
    <property type="entry name" value="Lon_lid"/>
    <property type="match status" value="1"/>
</dbReference>
<dbReference type="Pfam" id="PF02190">
    <property type="entry name" value="LON_substr_bdg"/>
    <property type="match status" value="1"/>
</dbReference>
<dbReference type="PIRSF" id="PIRSF001174">
    <property type="entry name" value="Lon_proteas"/>
    <property type="match status" value="1"/>
</dbReference>
<dbReference type="PRINTS" id="PR00830">
    <property type="entry name" value="ENDOLAPTASE"/>
</dbReference>
<dbReference type="SMART" id="SM00382">
    <property type="entry name" value="AAA"/>
    <property type="match status" value="1"/>
</dbReference>
<dbReference type="SMART" id="SM00464">
    <property type="entry name" value="LON"/>
    <property type="match status" value="1"/>
</dbReference>
<dbReference type="SUPFAM" id="SSF52540">
    <property type="entry name" value="P-loop containing nucleoside triphosphate hydrolases"/>
    <property type="match status" value="1"/>
</dbReference>
<dbReference type="SUPFAM" id="SSF88697">
    <property type="entry name" value="PUA domain-like"/>
    <property type="match status" value="1"/>
</dbReference>
<dbReference type="SUPFAM" id="SSF54211">
    <property type="entry name" value="Ribosomal protein S5 domain 2-like"/>
    <property type="match status" value="1"/>
</dbReference>
<dbReference type="PROSITE" id="PS51787">
    <property type="entry name" value="LON_N"/>
    <property type="match status" value="1"/>
</dbReference>
<dbReference type="PROSITE" id="PS51786">
    <property type="entry name" value="LON_PROTEOLYTIC"/>
    <property type="match status" value="1"/>
</dbReference>
<dbReference type="PROSITE" id="PS01046">
    <property type="entry name" value="LON_SER"/>
    <property type="match status" value="1"/>
</dbReference>
<reference key="1">
    <citation type="journal article" date="1996" name="J. Bacteriol.">
        <title>Cloning, nucleotide sequencing, and expression of the Azospirillum brasilense lon gene: involvement in iron uptake.</title>
        <authorList>
            <person name="Mori E."/>
            <person name="Fulchieri M."/>
            <person name="Indorato C."/>
            <person name="Fani R."/>
            <person name="Bazzicalupo M."/>
        </authorList>
    </citation>
    <scope>NUCLEOTIDE SEQUENCE [GENOMIC DNA]</scope>
    <scope>INDUCTION</scope>
    <source>
        <strain>SpF94</strain>
    </source>
</reference>
<accession>P77810</accession>
<sequence length="810" mass="90143">MKEAQSMFEIPRGALYPVPPLRDIVVFPHMIVPLFVGREKSVRALEDVMKDDKQILLVTQKNAAQDDPTPADIYSVGTVGTVLQLLKLPDGTVKVLVEGGQRASITKFAENEDFFQAHADLVEEKVGESQELEALGRAVVSQFEQYIKLNKKIPPEVLVSINQIEEPGKLADTVASHLALKIPEKQQLLECATVSERLERVYAFMEGEIGVLQVEKRIRNRVKRQMEKTQREYYLNEQLKAIQKELGETEDGRDESAELEEKINKTRFSKEARDKALAELKKLRSMSPMSAEATVVRNYLDWMLSIPWKKRTKVKKDLKLAQKILDADHYGLEKVKERILEYLRVQNRMNKVKGPIQSLVGPPGVGKTSLGKSIAKSTGRNFVRMSLGGVRDEAEVRGHRRTYIGSMPGKVIQGMKKAKSSNPLFLLDEIDKLGADWRGDPSSALLEVLDPEQNGTFNDHYLEVDYDLSDVMFVCTANTMRMPQPLLDRMEIIRVAGYTEDEKVEISKRHLIEKQVEANGLKKGEFAISDDALRDLIRYYTREAGVRSLEREIANLCRKAVKEILMKGSAGAKVSVTRRNLDKYAGVRRFHFGEAELEDLVGVTTGLAWTEVGGELLSIEAVSLPGKGRVTTTGKLGDVMKESVQAAESYVKSRATAFGIKPTLFEKRDIHVHVPEGATPKDGPSAGVAMITSIVSVLTGIAVRKDVAMTGEITLRGRVLPIGGLKEKLLAALRGGLKHVLIPKDNEKDLAEIPDNVKRGLEIIPVSTVDDVLKHALVREVEPIEWKEPEAVEPAVAKPQTDGGGEVLRH</sequence>
<evidence type="ECO:0000255" key="1">
    <source>
        <dbReference type="HAMAP-Rule" id="MF_01973"/>
    </source>
</evidence>
<evidence type="ECO:0000255" key="2">
    <source>
        <dbReference type="PROSITE-ProRule" id="PRU01122"/>
    </source>
</evidence>
<evidence type="ECO:0000255" key="3">
    <source>
        <dbReference type="PROSITE-ProRule" id="PRU01123"/>
    </source>
</evidence>
<evidence type="ECO:0000269" key="4">
    <source>
    </source>
</evidence>
<organism>
    <name type="scientific">Azospirillum brasilense</name>
    <dbReference type="NCBI Taxonomy" id="192"/>
    <lineage>
        <taxon>Bacteria</taxon>
        <taxon>Pseudomonadati</taxon>
        <taxon>Pseudomonadota</taxon>
        <taxon>Alphaproteobacteria</taxon>
        <taxon>Rhodospirillales</taxon>
        <taxon>Azospirillaceae</taxon>
        <taxon>Azospirillum</taxon>
    </lineage>
</organism>